<reference key="1">
    <citation type="journal article" date="2004" name="J. Mass Spectrom.">
        <title>Determining sequences and post-translational modifications of novel conotoxins in Conus victoriae using cDNA sequencing and mass spectrometry.</title>
        <authorList>
            <person name="Jakubowski J.A."/>
            <person name="Keays D.A."/>
            <person name="Kelley W.P."/>
            <person name="Sandall D.W."/>
            <person name="Bingham J.-P."/>
            <person name="Livett B.G."/>
            <person name="Gayler K.R."/>
            <person name="Sweedler J.V."/>
        </authorList>
    </citation>
    <scope>NUCLEOTIDE SEQUENCE [MRNA]</scope>
    <source>
        <tissue>Venom duct</tissue>
    </source>
</reference>
<reference key="2">
    <citation type="journal article" date="2004" name="Anal. Chem.">
        <title>Sequencing and mass profiling highly modified conotoxins using global reduction/alkylation followed by mass spectrometry.</title>
        <authorList>
            <person name="Jakubowski J.A."/>
            <person name="Sweedler J.V."/>
        </authorList>
    </citation>
    <scope>MASS SPECTROMETRY</scope>
    <source>
        <tissue>Venom</tissue>
    </source>
</reference>
<keyword id="KW-0165">Cleavage on pair of basic residues</keyword>
<keyword id="KW-1015">Disulfide bond</keyword>
<keyword id="KW-0872">Ion channel impairing toxin</keyword>
<keyword id="KW-0960">Knottin</keyword>
<keyword id="KW-0528">Neurotoxin</keyword>
<keyword id="KW-0964">Secreted</keyword>
<keyword id="KW-0732">Signal</keyword>
<keyword id="KW-0800">Toxin</keyword>
<name>O16C_CONVC</name>
<dbReference type="SMR" id="P69762"/>
<dbReference type="ConoServer" id="1398">
    <property type="toxin name" value="VcVIC precursor"/>
</dbReference>
<dbReference type="GO" id="GO:0005576">
    <property type="term" value="C:extracellular region"/>
    <property type="evidence" value="ECO:0007669"/>
    <property type="project" value="UniProtKB-SubCell"/>
</dbReference>
<dbReference type="GO" id="GO:0008200">
    <property type="term" value="F:ion channel inhibitor activity"/>
    <property type="evidence" value="ECO:0007669"/>
    <property type="project" value="InterPro"/>
</dbReference>
<dbReference type="GO" id="GO:0090729">
    <property type="term" value="F:toxin activity"/>
    <property type="evidence" value="ECO:0007669"/>
    <property type="project" value="UniProtKB-KW"/>
</dbReference>
<dbReference type="InterPro" id="IPR004214">
    <property type="entry name" value="Conotoxin"/>
</dbReference>
<dbReference type="Pfam" id="PF02950">
    <property type="entry name" value="Conotoxin"/>
    <property type="match status" value="1"/>
</dbReference>
<sequence>MKLTCMVIVAVLFLTANTFVTADDSGNGLENLFSKAHHEIKNPEASNLNKRCIPFLHPCTFFFPDCCNSICAQFICL</sequence>
<accession>P69762</accession>
<comment type="subcellular location">
    <subcellularLocation>
        <location>Secreted</location>
    </subcellularLocation>
</comment>
<comment type="tissue specificity">
    <text>Expressed by the venom duct.</text>
</comment>
<comment type="domain">
    <text evidence="1">The presence of a 'disulfide through disulfide knot' structurally defines this protein as a knottin.</text>
</comment>
<comment type="domain">
    <text>The cysteine framework is VI/VII (C-C-CC-C-C).</text>
</comment>
<comment type="mass spectrometry"/>
<comment type="similarity">
    <text evidence="4">Belongs to the conotoxin O1 superfamily.</text>
</comment>
<feature type="signal peptide" evidence="2">
    <location>
        <begin position="1"/>
        <end position="22"/>
    </location>
</feature>
<feature type="propeptide" id="PRO_0000034974" evidence="1">
    <location>
        <begin position="23"/>
        <end position="51"/>
    </location>
</feature>
<feature type="peptide" id="PRO_0000034975" description="Conotoxin Vc6c">
    <location>
        <begin position="52"/>
        <end position="77"/>
    </location>
</feature>
<feature type="disulfide bond" evidence="1">
    <location>
        <begin position="52"/>
        <end position="67"/>
    </location>
</feature>
<feature type="disulfide bond" evidence="1">
    <location>
        <begin position="59"/>
        <end position="71"/>
    </location>
</feature>
<feature type="disulfide bond" evidence="1">
    <location>
        <begin position="66"/>
        <end position="76"/>
    </location>
</feature>
<evidence type="ECO:0000250" key="1"/>
<evidence type="ECO:0000255" key="2"/>
<evidence type="ECO:0000269" key="3">
    <source>
    </source>
</evidence>
<evidence type="ECO:0000305" key="4"/>
<proteinExistence type="evidence at protein level"/>
<protein>
    <recommendedName>
        <fullName>Conotoxin Vc6c</fullName>
    </recommendedName>
    <alternativeName>
        <fullName>Vc6.5</fullName>
    </alternativeName>
</protein>
<organism>
    <name type="scientific">Conus victoriae</name>
    <name type="common">Queen Victoria cone</name>
    <dbReference type="NCBI Taxonomy" id="319920"/>
    <lineage>
        <taxon>Eukaryota</taxon>
        <taxon>Metazoa</taxon>
        <taxon>Spiralia</taxon>
        <taxon>Lophotrochozoa</taxon>
        <taxon>Mollusca</taxon>
        <taxon>Gastropoda</taxon>
        <taxon>Caenogastropoda</taxon>
        <taxon>Neogastropoda</taxon>
        <taxon>Conoidea</taxon>
        <taxon>Conidae</taxon>
        <taxon>Conus</taxon>
        <taxon>Cylinder</taxon>
    </lineage>
</organism>